<proteinExistence type="inferred from homology"/>
<evidence type="ECO:0000255" key="1">
    <source>
        <dbReference type="PROSITE-ProRule" id="PRU01182"/>
    </source>
</evidence>
<evidence type="ECO:0000305" key="2"/>
<keyword id="KW-0378">Hydrolase</keyword>
<keyword id="KW-0479">Metal-binding</keyword>
<keyword id="KW-0482">Metalloprotease</keyword>
<keyword id="KW-0645">Protease</keyword>
<keyword id="KW-0862">Zinc</keyword>
<feature type="chain" id="PRO_1000195286" description="UPF0758 protein BCQ_4241">
    <location>
        <begin position="1"/>
        <end position="225"/>
    </location>
</feature>
<feature type="domain" description="MPN" evidence="1">
    <location>
        <begin position="103"/>
        <end position="225"/>
    </location>
</feature>
<feature type="short sequence motif" description="JAMM motif" evidence="1">
    <location>
        <begin position="174"/>
        <end position="187"/>
    </location>
</feature>
<feature type="binding site" evidence="1">
    <location>
        <position position="174"/>
    </location>
    <ligand>
        <name>Zn(2+)</name>
        <dbReference type="ChEBI" id="CHEBI:29105"/>
        <note>catalytic</note>
    </ligand>
</feature>
<feature type="binding site" evidence="1">
    <location>
        <position position="176"/>
    </location>
    <ligand>
        <name>Zn(2+)</name>
        <dbReference type="ChEBI" id="CHEBI:29105"/>
        <note>catalytic</note>
    </ligand>
</feature>
<feature type="binding site" evidence="1">
    <location>
        <position position="187"/>
    </location>
    <ligand>
        <name>Zn(2+)</name>
        <dbReference type="ChEBI" id="CHEBI:29105"/>
        <note>catalytic</note>
    </ligand>
</feature>
<organism>
    <name type="scientific">Bacillus cereus (strain Q1)</name>
    <dbReference type="NCBI Taxonomy" id="361100"/>
    <lineage>
        <taxon>Bacteria</taxon>
        <taxon>Bacillati</taxon>
        <taxon>Bacillota</taxon>
        <taxon>Bacilli</taxon>
        <taxon>Bacillales</taxon>
        <taxon>Bacillaceae</taxon>
        <taxon>Bacillus</taxon>
        <taxon>Bacillus cereus group</taxon>
    </lineage>
</organism>
<name>Y4241_BACCQ</name>
<reference key="1">
    <citation type="journal article" date="2009" name="J. Bacteriol.">
        <title>Complete genome sequence of the extremophilic Bacillus cereus strain Q1 with industrial applications.</title>
        <authorList>
            <person name="Xiong Z."/>
            <person name="Jiang Y."/>
            <person name="Qi D."/>
            <person name="Lu H."/>
            <person name="Yang F."/>
            <person name="Yang J."/>
            <person name="Chen L."/>
            <person name="Sun L."/>
            <person name="Xu X."/>
            <person name="Xue Y."/>
            <person name="Zhu Y."/>
            <person name="Jin Q."/>
        </authorList>
    </citation>
    <scope>NUCLEOTIDE SEQUENCE [LARGE SCALE GENOMIC DNA]</scope>
    <source>
        <strain>Q1</strain>
    </source>
</reference>
<comment type="similarity">
    <text evidence="2">Belongs to the UPF0758 family.</text>
</comment>
<gene>
    <name type="ordered locus">BCQ_4241</name>
</gene>
<protein>
    <recommendedName>
        <fullName>UPF0758 protein BCQ_4241</fullName>
    </recommendedName>
</protein>
<sequence>MNGIRDVVKEEQPRERLLLEGAGSLSNRELLAVLLRTGSKDETVLKLSDKILHHFDGLRMLKDATLEELVSIHGVGVAKASQLIAAFELGRRMVRLEYQNRYSIRSPEDCARYMMEEMRFLQQEHFVCLYLNTKNQVIHRQTIFIGSLNSSIVHPREVFKEAFRRAAASIICLHNHPSGDPAPSREDIEVTKRLVECGRIIGIEVLDHIIIGDHKFVSLKEKGHI</sequence>
<dbReference type="EMBL" id="CP000227">
    <property type="protein sequence ID" value="ACM14668.1"/>
    <property type="molecule type" value="Genomic_DNA"/>
</dbReference>
<dbReference type="SMR" id="B9IZ29"/>
<dbReference type="KEGG" id="bcq:BCQ_4241"/>
<dbReference type="HOGENOM" id="CLU_073529_0_2_9"/>
<dbReference type="Proteomes" id="UP000000441">
    <property type="component" value="Chromosome"/>
</dbReference>
<dbReference type="GO" id="GO:0046872">
    <property type="term" value="F:metal ion binding"/>
    <property type="evidence" value="ECO:0007669"/>
    <property type="project" value="UniProtKB-KW"/>
</dbReference>
<dbReference type="GO" id="GO:0008237">
    <property type="term" value="F:metallopeptidase activity"/>
    <property type="evidence" value="ECO:0007669"/>
    <property type="project" value="UniProtKB-KW"/>
</dbReference>
<dbReference type="GO" id="GO:0006508">
    <property type="term" value="P:proteolysis"/>
    <property type="evidence" value="ECO:0007669"/>
    <property type="project" value="UniProtKB-KW"/>
</dbReference>
<dbReference type="CDD" id="cd08071">
    <property type="entry name" value="MPN_DUF2466"/>
    <property type="match status" value="1"/>
</dbReference>
<dbReference type="Gene3D" id="3.40.140.10">
    <property type="entry name" value="Cytidine Deaminase, domain 2"/>
    <property type="match status" value="1"/>
</dbReference>
<dbReference type="InterPro" id="IPR037518">
    <property type="entry name" value="MPN"/>
</dbReference>
<dbReference type="InterPro" id="IPR025657">
    <property type="entry name" value="RadC_JAB"/>
</dbReference>
<dbReference type="InterPro" id="IPR010994">
    <property type="entry name" value="RuvA_2-like"/>
</dbReference>
<dbReference type="InterPro" id="IPR001405">
    <property type="entry name" value="UPF0758"/>
</dbReference>
<dbReference type="InterPro" id="IPR020891">
    <property type="entry name" value="UPF0758_CS"/>
</dbReference>
<dbReference type="InterPro" id="IPR046778">
    <property type="entry name" value="UPF0758_N"/>
</dbReference>
<dbReference type="NCBIfam" id="NF000642">
    <property type="entry name" value="PRK00024.1"/>
    <property type="match status" value="1"/>
</dbReference>
<dbReference type="NCBIfam" id="TIGR00608">
    <property type="entry name" value="radc"/>
    <property type="match status" value="1"/>
</dbReference>
<dbReference type="PANTHER" id="PTHR30471">
    <property type="entry name" value="DNA REPAIR PROTEIN RADC"/>
    <property type="match status" value="1"/>
</dbReference>
<dbReference type="PANTHER" id="PTHR30471:SF3">
    <property type="entry name" value="UPF0758 PROTEIN YEES-RELATED"/>
    <property type="match status" value="1"/>
</dbReference>
<dbReference type="Pfam" id="PF04002">
    <property type="entry name" value="RadC"/>
    <property type="match status" value="1"/>
</dbReference>
<dbReference type="Pfam" id="PF20582">
    <property type="entry name" value="UPF0758_N"/>
    <property type="match status" value="1"/>
</dbReference>
<dbReference type="SUPFAM" id="SSF47781">
    <property type="entry name" value="RuvA domain 2-like"/>
    <property type="match status" value="1"/>
</dbReference>
<dbReference type="PROSITE" id="PS50249">
    <property type="entry name" value="MPN"/>
    <property type="match status" value="1"/>
</dbReference>
<dbReference type="PROSITE" id="PS01302">
    <property type="entry name" value="UPF0758"/>
    <property type="match status" value="1"/>
</dbReference>
<accession>B9IZ29</accession>